<comment type="function">
    <text evidence="1">One of the early assembly proteins it binds 23S rRNA. One of the proteins that surrounds the polypeptide exit tunnel on the outside of the ribosome. Forms the main docking site for trigger factor binding to the ribosome.</text>
</comment>
<comment type="subunit">
    <text evidence="1">Part of the 50S ribosomal subunit. Contacts protein L29, and trigger factor when it is bound to the ribosome.</text>
</comment>
<comment type="similarity">
    <text evidence="1">Belongs to the universal ribosomal protein uL23 family.</text>
</comment>
<proteinExistence type="inferred from homology"/>
<feature type="chain" id="PRO_0000272825" description="Large ribosomal subunit protein uL23">
    <location>
        <begin position="1"/>
        <end position="99"/>
    </location>
</feature>
<reference key="1">
    <citation type="submission" date="2006-03" db="EMBL/GenBank/DDBJ databases">
        <title>Complete sequence of Rhodopseudomonas palustris BisB5.</title>
        <authorList>
            <consortium name="US DOE Joint Genome Institute"/>
            <person name="Copeland A."/>
            <person name="Lucas S."/>
            <person name="Lapidus A."/>
            <person name="Barry K."/>
            <person name="Detter J.C."/>
            <person name="Glavina del Rio T."/>
            <person name="Hammon N."/>
            <person name="Israni S."/>
            <person name="Dalin E."/>
            <person name="Tice H."/>
            <person name="Pitluck S."/>
            <person name="Chain P."/>
            <person name="Malfatti S."/>
            <person name="Shin M."/>
            <person name="Vergez L."/>
            <person name="Schmutz J."/>
            <person name="Larimer F."/>
            <person name="Land M."/>
            <person name="Hauser L."/>
            <person name="Pelletier D.A."/>
            <person name="Kyrpides N."/>
            <person name="Lykidis A."/>
            <person name="Oda Y."/>
            <person name="Harwood C.S."/>
            <person name="Richardson P."/>
        </authorList>
    </citation>
    <scope>NUCLEOTIDE SEQUENCE [LARGE SCALE GENOMIC DNA]</scope>
    <source>
        <strain>BisB5</strain>
    </source>
</reference>
<gene>
    <name evidence="1" type="primary">rplW</name>
    <name type="ordered locus">RPD_3182</name>
</gene>
<accession>Q134T1</accession>
<keyword id="KW-0687">Ribonucleoprotein</keyword>
<keyword id="KW-0689">Ribosomal protein</keyword>
<keyword id="KW-0694">RNA-binding</keyword>
<keyword id="KW-0699">rRNA-binding</keyword>
<dbReference type="EMBL" id="CP000283">
    <property type="protein sequence ID" value="ABE40408.1"/>
    <property type="molecule type" value="Genomic_DNA"/>
</dbReference>
<dbReference type="SMR" id="Q134T1"/>
<dbReference type="STRING" id="316057.RPD_3182"/>
<dbReference type="KEGG" id="rpd:RPD_3182"/>
<dbReference type="eggNOG" id="COG0089">
    <property type="taxonomic scope" value="Bacteria"/>
</dbReference>
<dbReference type="HOGENOM" id="CLU_037562_3_1_5"/>
<dbReference type="BioCyc" id="RPAL316057:RPD_RS15975-MONOMER"/>
<dbReference type="Proteomes" id="UP000001818">
    <property type="component" value="Chromosome"/>
</dbReference>
<dbReference type="GO" id="GO:1990904">
    <property type="term" value="C:ribonucleoprotein complex"/>
    <property type="evidence" value="ECO:0007669"/>
    <property type="project" value="UniProtKB-KW"/>
</dbReference>
<dbReference type="GO" id="GO:0005840">
    <property type="term" value="C:ribosome"/>
    <property type="evidence" value="ECO:0007669"/>
    <property type="project" value="UniProtKB-KW"/>
</dbReference>
<dbReference type="GO" id="GO:0019843">
    <property type="term" value="F:rRNA binding"/>
    <property type="evidence" value="ECO:0007669"/>
    <property type="project" value="UniProtKB-UniRule"/>
</dbReference>
<dbReference type="GO" id="GO:0003735">
    <property type="term" value="F:structural constituent of ribosome"/>
    <property type="evidence" value="ECO:0007669"/>
    <property type="project" value="InterPro"/>
</dbReference>
<dbReference type="GO" id="GO:0006412">
    <property type="term" value="P:translation"/>
    <property type="evidence" value="ECO:0007669"/>
    <property type="project" value="UniProtKB-UniRule"/>
</dbReference>
<dbReference type="FunFam" id="3.30.70.330:FF:000001">
    <property type="entry name" value="50S ribosomal protein L23"/>
    <property type="match status" value="1"/>
</dbReference>
<dbReference type="Gene3D" id="3.30.70.330">
    <property type="match status" value="1"/>
</dbReference>
<dbReference type="HAMAP" id="MF_01369_B">
    <property type="entry name" value="Ribosomal_uL23_B"/>
    <property type="match status" value="1"/>
</dbReference>
<dbReference type="InterPro" id="IPR012677">
    <property type="entry name" value="Nucleotide-bd_a/b_plait_sf"/>
</dbReference>
<dbReference type="InterPro" id="IPR013025">
    <property type="entry name" value="Ribosomal_uL23-like"/>
</dbReference>
<dbReference type="InterPro" id="IPR012678">
    <property type="entry name" value="Ribosomal_uL23/eL15/eS24_sf"/>
</dbReference>
<dbReference type="InterPro" id="IPR001014">
    <property type="entry name" value="Ribosomal_uL23_CS"/>
</dbReference>
<dbReference type="NCBIfam" id="NF004359">
    <property type="entry name" value="PRK05738.1-3"/>
    <property type="match status" value="1"/>
</dbReference>
<dbReference type="NCBIfam" id="NF004360">
    <property type="entry name" value="PRK05738.1-5"/>
    <property type="match status" value="1"/>
</dbReference>
<dbReference type="NCBIfam" id="NF004363">
    <property type="entry name" value="PRK05738.2-4"/>
    <property type="match status" value="1"/>
</dbReference>
<dbReference type="PANTHER" id="PTHR11620">
    <property type="entry name" value="60S RIBOSOMAL PROTEIN L23A"/>
    <property type="match status" value="1"/>
</dbReference>
<dbReference type="Pfam" id="PF00276">
    <property type="entry name" value="Ribosomal_L23"/>
    <property type="match status" value="1"/>
</dbReference>
<dbReference type="SUPFAM" id="SSF54189">
    <property type="entry name" value="Ribosomal proteins S24e, L23 and L15e"/>
    <property type="match status" value="1"/>
</dbReference>
<dbReference type="PROSITE" id="PS00050">
    <property type="entry name" value="RIBOSOMAL_L23"/>
    <property type="match status" value="1"/>
</dbReference>
<organism>
    <name type="scientific">Rhodopseudomonas palustris (strain BisB5)</name>
    <dbReference type="NCBI Taxonomy" id="316057"/>
    <lineage>
        <taxon>Bacteria</taxon>
        <taxon>Pseudomonadati</taxon>
        <taxon>Pseudomonadota</taxon>
        <taxon>Alphaproteobacteria</taxon>
        <taxon>Hyphomicrobiales</taxon>
        <taxon>Nitrobacteraceae</taxon>
        <taxon>Rhodopseudomonas</taxon>
    </lineage>
</organism>
<protein>
    <recommendedName>
        <fullName evidence="1">Large ribosomal subunit protein uL23</fullName>
    </recommendedName>
    <alternativeName>
        <fullName evidence="2">50S ribosomal protein L23</fullName>
    </alternativeName>
</protein>
<evidence type="ECO:0000255" key="1">
    <source>
        <dbReference type="HAMAP-Rule" id="MF_01369"/>
    </source>
</evidence>
<evidence type="ECO:0000305" key="2"/>
<name>RL23_RHOPS</name>
<sequence>MKSIDPRHYDVIVSPVVTEKATMASEHNKVVFKVLSGATKPQIKEAVEKLFDVKVKSVNTLVRKGKSKSFRGTFGTQSDVKRAVVTLEEGHRIDVTTGL</sequence>